<sequence length="239" mass="26004">MNVNFFVTCIGDALKSRMARDSVLLLEKLGCRVNFPEKQGCCGQPAINSGYIKEAIPGMKNLIAALEDNDDPIISPAGSCTYAVKSYPTYLADEPEWASRAAKVAARMQDLTSFIVNKLGVVDVGASLQGRAVYHPSCSLARKLGVKDEPLTLLKNVRGLELLTFAEQDTCCGFGGTFSVKMAEISGEMVKEKVAHLMEVRPEYLIGADVSCLLNISGRLQREGQKVKVMHIAEVLMSR</sequence>
<feature type="chain" id="PRO_0000168569" description="Uncharacterized protein YkgE">
    <location>
        <begin position="1"/>
        <end position="239"/>
    </location>
</feature>
<accession>P77252</accession>
<accession>Q2MCB6</accession>
<dbReference type="EMBL" id="U73857">
    <property type="protein sequence ID" value="AAB18033.1"/>
    <property type="molecule type" value="Genomic_DNA"/>
</dbReference>
<dbReference type="EMBL" id="U00096">
    <property type="protein sequence ID" value="AAC73409.1"/>
    <property type="molecule type" value="Genomic_DNA"/>
</dbReference>
<dbReference type="EMBL" id="AP009048">
    <property type="protein sequence ID" value="BAE76090.1"/>
    <property type="molecule type" value="Genomic_DNA"/>
</dbReference>
<dbReference type="PIR" id="B64757">
    <property type="entry name" value="B64757"/>
</dbReference>
<dbReference type="RefSeq" id="NP_414840.1">
    <property type="nucleotide sequence ID" value="NC_000913.3"/>
</dbReference>
<dbReference type="RefSeq" id="WP_001102108.1">
    <property type="nucleotide sequence ID" value="NZ_SSZK01000067.1"/>
</dbReference>
<dbReference type="SMR" id="P77252"/>
<dbReference type="BioGRID" id="4262811">
    <property type="interactions" value="28"/>
</dbReference>
<dbReference type="FunCoup" id="P77252">
    <property type="interactions" value="241"/>
</dbReference>
<dbReference type="STRING" id="511145.b0306"/>
<dbReference type="jPOST" id="P77252"/>
<dbReference type="PaxDb" id="511145-b0306"/>
<dbReference type="EnsemblBacteria" id="AAC73409">
    <property type="protein sequence ID" value="AAC73409"/>
    <property type="gene ID" value="b0306"/>
</dbReference>
<dbReference type="GeneID" id="948438"/>
<dbReference type="KEGG" id="ecj:JW5041"/>
<dbReference type="KEGG" id="eco:b0306"/>
<dbReference type="KEGG" id="ecoc:C3026_01500"/>
<dbReference type="KEGG" id="ecoc:C3026_24675"/>
<dbReference type="PATRIC" id="fig|1411691.4.peg.1971"/>
<dbReference type="EchoBASE" id="EB3352"/>
<dbReference type="eggNOG" id="COG0247">
    <property type="taxonomic scope" value="Bacteria"/>
</dbReference>
<dbReference type="HOGENOM" id="CLU_023081_1_0_6"/>
<dbReference type="InParanoid" id="P77252"/>
<dbReference type="OMA" id="NSCLMHI"/>
<dbReference type="OrthoDB" id="9770306at2"/>
<dbReference type="PhylomeDB" id="P77252"/>
<dbReference type="BioCyc" id="EcoCyc:G6176-MONOMER"/>
<dbReference type="PRO" id="PR:P77252"/>
<dbReference type="Proteomes" id="UP000000625">
    <property type="component" value="Chromosome"/>
</dbReference>
<dbReference type="GO" id="GO:0005829">
    <property type="term" value="C:cytosol"/>
    <property type="evidence" value="ECO:0000314"/>
    <property type="project" value="EcoCyc"/>
</dbReference>
<dbReference type="GO" id="GO:0004459">
    <property type="term" value="F:L-lactate dehydrogenase activity"/>
    <property type="evidence" value="ECO:0000269"/>
    <property type="project" value="EcoCyc"/>
</dbReference>
<dbReference type="InterPro" id="IPR004017">
    <property type="entry name" value="Cys_rich_dom"/>
</dbReference>
<dbReference type="PANTHER" id="PTHR30296:SF0">
    <property type="entry name" value="LACTATE UTILIZATION PROTEIN A"/>
    <property type="match status" value="1"/>
</dbReference>
<dbReference type="PANTHER" id="PTHR30296">
    <property type="entry name" value="UNCHARACTERIZED PROTEIN YKGE"/>
    <property type="match status" value="1"/>
</dbReference>
<dbReference type="Pfam" id="PF02754">
    <property type="entry name" value="CCG"/>
    <property type="match status" value="2"/>
</dbReference>
<reference key="1">
    <citation type="submission" date="1997-01" db="EMBL/GenBank/DDBJ databases">
        <title>Sequence of minutes 4-25 of Escherichia coli.</title>
        <authorList>
            <person name="Chung E."/>
            <person name="Allen E."/>
            <person name="Araujo R."/>
            <person name="Aparicio A.M."/>
            <person name="Davis K."/>
            <person name="Duncan M."/>
            <person name="Federspiel N."/>
            <person name="Hyman R."/>
            <person name="Kalman S."/>
            <person name="Komp C."/>
            <person name="Kurdi O."/>
            <person name="Lew H."/>
            <person name="Lin D."/>
            <person name="Namath A."/>
            <person name="Oefner P."/>
            <person name="Roberts D."/>
            <person name="Schramm S."/>
            <person name="Davis R.W."/>
        </authorList>
    </citation>
    <scope>NUCLEOTIDE SEQUENCE [LARGE SCALE GENOMIC DNA]</scope>
    <source>
        <strain>K12 / MG1655 / ATCC 47076</strain>
    </source>
</reference>
<reference key="2">
    <citation type="journal article" date="1997" name="Science">
        <title>The complete genome sequence of Escherichia coli K-12.</title>
        <authorList>
            <person name="Blattner F.R."/>
            <person name="Plunkett G. III"/>
            <person name="Bloch C.A."/>
            <person name="Perna N.T."/>
            <person name="Burland V."/>
            <person name="Riley M."/>
            <person name="Collado-Vides J."/>
            <person name="Glasner J.D."/>
            <person name="Rode C.K."/>
            <person name="Mayhew G.F."/>
            <person name="Gregor J."/>
            <person name="Davis N.W."/>
            <person name="Kirkpatrick H.A."/>
            <person name="Goeden M.A."/>
            <person name="Rose D.J."/>
            <person name="Mau B."/>
            <person name="Shao Y."/>
        </authorList>
    </citation>
    <scope>NUCLEOTIDE SEQUENCE [LARGE SCALE GENOMIC DNA]</scope>
    <source>
        <strain>K12 / MG1655 / ATCC 47076</strain>
    </source>
</reference>
<reference key="3">
    <citation type="journal article" date="2006" name="Mol. Syst. Biol.">
        <title>Highly accurate genome sequences of Escherichia coli K-12 strains MG1655 and W3110.</title>
        <authorList>
            <person name="Hayashi K."/>
            <person name="Morooka N."/>
            <person name="Yamamoto Y."/>
            <person name="Fujita K."/>
            <person name="Isono K."/>
            <person name="Choi S."/>
            <person name="Ohtsubo E."/>
            <person name="Baba T."/>
            <person name="Wanner B.L."/>
            <person name="Mori H."/>
            <person name="Horiuchi T."/>
        </authorList>
    </citation>
    <scope>NUCLEOTIDE SEQUENCE [LARGE SCALE GENOMIC DNA]</scope>
    <source>
        <strain>K12 / W3110 / ATCC 27325 / DSM 5911</strain>
    </source>
</reference>
<reference key="4">
    <citation type="journal article" date="2009" name="J. Bacteriol.">
        <title>A widely conserved gene cluster required for lactate utilization in Bacillus subtilis and its involvement in biofilm formation.</title>
        <authorList>
            <person name="Chai Y."/>
            <person name="Kolter R."/>
            <person name="Losick R."/>
        </authorList>
    </citation>
    <scope>LACK OF COMPLEMENTATION OF B.SUBTILIS LUTABC OPERON</scope>
    <source>
        <strain>K12</strain>
    </source>
</reference>
<organism>
    <name type="scientific">Escherichia coli (strain K12)</name>
    <dbReference type="NCBI Taxonomy" id="83333"/>
    <lineage>
        <taxon>Bacteria</taxon>
        <taxon>Pseudomonadati</taxon>
        <taxon>Pseudomonadota</taxon>
        <taxon>Gammaproteobacteria</taxon>
        <taxon>Enterobacterales</taxon>
        <taxon>Enterobacteriaceae</taxon>
        <taxon>Escherichia</taxon>
    </lineage>
</organism>
<gene>
    <name type="primary">ykgE</name>
    <name type="ordered locus">b0306</name>
    <name type="ordered locus">JW5041</name>
</gene>
<comment type="miscellaneous">
    <text>The E.coli ykgEFG operon is a clear homolog of the B.subtilis lutABC operon, however it is not able of restoring L-lactate utilization to the B.subtilis mutant for lutABC operon. Thus, ykgEFG operon may contribute to lactate catabolism in E.coli, but under conditions other than those tested, or alternatively, the ykgEFG operon may be responsible for the catabolism of a metabolite other than (but perhaps related to) lactate in E.coli.</text>
</comment>
<comment type="similarity">
    <text evidence="1">Belongs to the LutA/YkgE family.</text>
</comment>
<keyword id="KW-1185">Reference proteome</keyword>
<name>YKGE_ECOLI</name>
<proteinExistence type="inferred from homology"/>
<protein>
    <recommendedName>
        <fullName>Uncharacterized protein YkgE</fullName>
    </recommendedName>
</protein>
<evidence type="ECO:0000305" key="1"/>